<sequence>MAFRWRSLMRFRSTTRLLLLFTFCLTVIHSLGNDVDSCDKLHLGQYLCKEPRIDDATQEPETCKDRVAWVECLPAPNISCRLSNGTQFKFSGEEVGFNKTIPCRNVSGYSYKVAVALSLFLGWIGADRFYLGYPALGLLKFCTVGFCGIGSLVDFMLISMQIVGPSDGSDYIVDYYGARLTRLSITNETYRRMQPSP</sequence>
<gene>
    <name type="primary">tm2d1</name>
    <name type="ORF">si:ch211-112f11.3</name>
</gene>
<keyword id="KW-0325">Glycoprotein</keyword>
<keyword id="KW-0472">Membrane</keyword>
<keyword id="KW-1185">Reference proteome</keyword>
<keyword id="KW-0732">Signal</keyword>
<keyword id="KW-0812">Transmembrane</keyword>
<keyword id="KW-1133">Transmembrane helix</keyword>
<name>TM2D1_DANRE</name>
<accession>A5PLH4</accession>
<accession>A8DZE2</accession>
<feature type="signal peptide" evidence="1">
    <location>
        <begin position="1"/>
        <end position="32"/>
    </location>
</feature>
<feature type="chain" id="PRO_0000298980" description="TM2 domain-containing protein 1">
    <location>
        <begin position="33"/>
        <end position="197"/>
    </location>
</feature>
<feature type="topological domain" description="Extracellular" evidence="3">
    <location>
        <begin position="33"/>
        <end position="105"/>
    </location>
</feature>
<feature type="transmembrane region" description="Helical" evidence="1">
    <location>
        <begin position="106"/>
        <end position="126"/>
    </location>
</feature>
<feature type="topological domain" description="Cytoplasmic" evidence="3">
    <location>
        <begin position="127"/>
        <end position="143"/>
    </location>
</feature>
<feature type="transmembrane region" description="Helical" evidence="1">
    <location>
        <begin position="144"/>
        <end position="164"/>
    </location>
</feature>
<feature type="topological domain" description="Extracellular" evidence="3">
    <location>
        <begin position="165"/>
        <end position="197"/>
    </location>
</feature>
<feature type="domain" description="TM2" evidence="1">
    <location>
        <begin position="108"/>
        <end position="155"/>
    </location>
</feature>
<feature type="glycosylation site" description="N-linked (GlcNAc...) asparagine" evidence="2">
    <location>
        <position position="77"/>
    </location>
</feature>
<feature type="glycosylation site" description="N-linked (GlcNAc...) asparagine" evidence="2">
    <location>
        <position position="84"/>
    </location>
</feature>
<feature type="glycosylation site" description="N-linked (GlcNAc...) asparagine" evidence="2">
    <location>
        <position position="98"/>
    </location>
</feature>
<feature type="glycosylation site" description="N-linked (GlcNAc...) asparagine" evidence="2">
    <location>
        <position position="105"/>
    </location>
</feature>
<feature type="glycosylation site" description="N-linked (GlcNAc...) asparagine" evidence="2">
    <location>
        <position position="187"/>
    </location>
</feature>
<proteinExistence type="evidence at transcript level"/>
<organism>
    <name type="scientific">Danio rerio</name>
    <name type="common">Zebrafish</name>
    <name type="synonym">Brachydanio rerio</name>
    <dbReference type="NCBI Taxonomy" id="7955"/>
    <lineage>
        <taxon>Eukaryota</taxon>
        <taxon>Metazoa</taxon>
        <taxon>Chordata</taxon>
        <taxon>Craniata</taxon>
        <taxon>Vertebrata</taxon>
        <taxon>Euteleostomi</taxon>
        <taxon>Actinopterygii</taxon>
        <taxon>Neopterygii</taxon>
        <taxon>Teleostei</taxon>
        <taxon>Ostariophysi</taxon>
        <taxon>Cypriniformes</taxon>
        <taxon>Danionidae</taxon>
        <taxon>Danioninae</taxon>
        <taxon>Danio</taxon>
    </lineage>
</organism>
<dbReference type="EMBL" id="AL929239">
    <property type="protein sequence ID" value="CAP09388.2"/>
    <property type="molecule type" value="Genomic_DNA"/>
</dbReference>
<dbReference type="EMBL" id="BC142903">
    <property type="protein sequence ID" value="AAI42904.1"/>
    <property type="molecule type" value="mRNA"/>
</dbReference>
<dbReference type="RefSeq" id="NP_001092733.1">
    <property type="nucleotide sequence ID" value="NM_001099263.1"/>
</dbReference>
<dbReference type="RefSeq" id="XP_017208578.1">
    <property type="nucleotide sequence ID" value="XM_017353089.1"/>
</dbReference>
<dbReference type="RefSeq" id="XP_068072322.1">
    <property type="nucleotide sequence ID" value="XM_068216221.1"/>
</dbReference>
<dbReference type="RefSeq" id="XP_068072323.1">
    <property type="nucleotide sequence ID" value="XM_068216222.1"/>
</dbReference>
<dbReference type="SMR" id="A5PLH4"/>
<dbReference type="FunCoup" id="A5PLH4">
    <property type="interactions" value="1725"/>
</dbReference>
<dbReference type="STRING" id="7955.ENSDARP00000074090"/>
<dbReference type="GlyCosmos" id="A5PLH4">
    <property type="glycosylation" value="3 sites, No reported glycans"/>
</dbReference>
<dbReference type="PaxDb" id="7955-ENSDARP00000100423"/>
<dbReference type="PeptideAtlas" id="A5PLH4"/>
<dbReference type="Ensembl" id="ENSDART00000079638">
    <property type="protein sequence ID" value="ENSDARP00000074090"/>
    <property type="gene ID" value="ENSDARG00000057042"/>
</dbReference>
<dbReference type="Ensembl" id="ENSDART00000113099">
    <property type="protein sequence ID" value="ENSDARP00000100423"/>
    <property type="gene ID" value="ENSDARG00000057042"/>
</dbReference>
<dbReference type="GeneID" id="100093710"/>
<dbReference type="KEGG" id="dre:100093710"/>
<dbReference type="AGR" id="ZFIN:ZDB-GENE-050208-580"/>
<dbReference type="CTD" id="83941"/>
<dbReference type="ZFIN" id="ZDB-GENE-050208-580">
    <property type="gene designation" value="tm2d1"/>
</dbReference>
<dbReference type="eggNOG" id="KOG4272">
    <property type="taxonomic scope" value="Eukaryota"/>
</dbReference>
<dbReference type="HOGENOM" id="CLU_110523_0_0_1"/>
<dbReference type="InParanoid" id="A5PLH4"/>
<dbReference type="OMA" id="ETFRKPH"/>
<dbReference type="OrthoDB" id="5804096at2759"/>
<dbReference type="PhylomeDB" id="A5PLH4"/>
<dbReference type="PRO" id="PR:A5PLH4"/>
<dbReference type="Proteomes" id="UP000000437">
    <property type="component" value="Chromosome 22"/>
</dbReference>
<dbReference type="Bgee" id="ENSDARG00000057042">
    <property type="expression patterns" value="Expressed in mature ovarian follicle and 21 other cell types or tissues"/>
</dbReference>
<dbReference type="ExpressionAtlas" id="A5PLH4">
    <property type="expression patterns" value="baseline and differential"/>
</dbReference>
<dbReference type="GO" id="GO:0016020">
    <property type="term" value="C:membrane"/>
    <property type="evidence" value="ECO:0007669"/>
    <property type="project" value="UniProtKB-SubCell"/>
</dbReference>
<dbReference type="InterPro" id="IPR007829">
    <property type="entry name" value="TM2"/>
</dbReference>
<dbReference type="InterPro" id="IPR050932">
    <property type="entry name" value="TM2D1-3-like"/>
</dbReference>
<dbReference type="PANTHER" id="PTHR21016">
    <property type="entry name" value="BETA-AMYLOID BINDING PROTEIN-RELATED"/>
    <property type="match status" value="1"/>
</dbReference>
<dbReference type="PANTHER" id="PTHR21016:SF1">
    <property type="entry name" value="TM2 DOMAIN-CONTAINING PROTEIN 1"/>
    <property type="match status" value="1"/>
</dbReference>
<dbReference type="Pfam" id="PF05154">
    <property type="entry name" value="TM2"/>
    <property type="match status" value="1"/>
</dbReference>
<comment type="subcellular location">
    <subcellularLocation>
        <location evidence="3">Membrane</location>
        <topology evidence="3">Multi-pass membrane protein</topology>
    </subcellularLocation>
</comment>
<comment type="similarity">
    <text evidence="3">Belongs to the TM2 family.</text>
</comment>
<evidence type="ECO:0000255" key="1"/>
<evidence type="ECO:0000255" key="2">
    <source>
        <dbReference type="PROSITE-ProRule" id="PRU00498"/>
    </source>
</evidence>
<evidence type="ECO:0000305" key="3"/>
<reference key="1">
    <citation type="journal article" date="2013" name="Nature">
        <title>The zebrafish reference genome sequence and its relationship to the human genome.</title>
        <authorList>
            <person name="Howe K."/>
            <person name="Clark M.D."/>
            <person name="Torroja C.F."/>
            <person name="Torrance J."/>
            <person name="Berthelot C."/>
            <person name="Muffato M."/>
            <person name="Collins J.E."/>
            <person name="Humphray S."/>
            <person name="McLaren K."/>
            <person name="Matthews L."/>
            <person name="McLaren S."/>
            <person name="Sealy I."/>
            <person name="Caccamo M."/>
            <person name="Churcher C."/>
            <person name="Scott C."/>
            <person name="Barrett J.C."/>
            <person name="Koch R."/>
            <person name="Rauch G.J."/>
            <person name="White S."/>
            <person name="Chow W."/>
            <person name="Kilian B."/>
            <person name="Quintais L.T."/>
            <person name="Guerra-Assuncao J.A."/>
            <person name="Zhou Y."/>
            <person name="Gu Y."/>
            <person name="Yen J."/>
            <person name="Vogel J.H."/>
            <person name="Eyre T."/>
            <person name="Redmond S."/>
            <person name="Banerjee R."/>
            <person name="Chi J."/>
            <person name="Fu B."/>
            <person name="Langley E."/>
            <person name="Maguire S.F."/>
            <person name="Laird G.K."/>
            <person name="Lloyd D."/>
            <person name="Kenyon E."/>
            <person name="Donaldson S."/>
            <person name="Sehra H."/>
            <person name="Almeida-King J."/>
            <person name="Loveland J."/>
            <person name="Trevanion S."/>
            <person name="Jones M."/>
            <person name="Quail M."/>
            <person name="Willey D."/>
            <person name="Hunt A."/>
            <person name="Burton J."/>
            <person name="Sims S."/>
            <person name="McLay K."/>
            <person name="Plumb B."/>
            <person name="Davis J."/>
            <person name="Clee C."/>
            <person name="Oliver K."/>
            <person name="Clark R."/>
            <person name="Riddle C."/>
            <person name="Elliot D."/>
            <person name="Threadgold G."/>
            <person name="Harden G."/>
            <person name="Ware D."/>
            <person name="Begum S."/>
            <person name="Mortimore B."/>
            <person name="Kerry G."/>
            <person name="Heath P."/>
            <person name="Phillimore B."/>
            <person name="Tracey A."/>
            <person name="Corby N."/>
            <person name="Dunn M."/>
            <person name="Johnson C."/>
            <person name="Wood J."/>
            <person name="Clark S."/>
            <person name="Pelan S."/>
            <person name="Griffiths G."/>
            <person name="Smith M."/>
            <person name="Glithero R."/>
            <person name="Howden P."/>
            <person name="Barker N."/>
            <person name="Lloyd C."/>
            <person name="Stevens C."/>
            <person name="Harley J."/>
            <person name="Holt K."/>
            <person name="Panagiotidis G."/>
            <person name="Lovell J."/>
            <person name="Beasley H."/>
            <person name="Henderson C."/>
            <person name="Gordon D."/>
            <person name="Auger K."/>
            <person name="Wright D."/>
            <person name="Collins J."/>
            <person name="Raisen C."/>
            <person name="Dyer L."/>
            <person name="Leung K."/>
            <person name="Robertson L."/>
            <person name="Ambridge K."/>
            <person name="Leongamornlert D."/>
            <person name="McGuire S."/>
            <person name="Gilderthorp R."/>
            <person name="Griffiths C."/>
            <person name="Manthravadi D."/>
            <person name="Nichol S."/>
            <person name="Barker G."/>
            <person name="Whitehead S."/>
            <person name="Kay M."/>
            <person name="Brown J."/>
            <person name="Murnane C."/>
            <person name="Gray E."/>
            <person name="Humphries M."/>
            <person name="Sycamore N."/>
            <person name="Barker D."/>
            <person name="Saunders D."/>
            <person name="Wallis J."/>
            <person name="Babbage A."/>
            <person name="Hammond S."/>
            <person name="Mashreghi-Mohammadi M."/>
            <person name="Barr L."/>
            <person name="Martin S."/>
            <person name="Wray P."/>
            <person name="Ellington A."/>
            <person name="Matthews N."/>
            <person name="Ellwood M."/>
            <person name="Woodmansey R."/>
            <person name="Clark G."/>
            <person name="Cooper J."/>
            <person name="Tromans A."/>
            <person name="Grafham D."/>
            <person name="Skuce C."/>
            <person name="Pandian R."/>
            <person name="Andrews R."/>
            <person name="Harrison E."/>
            <person name="Kimberley A."/>
            <person name="Garnett J."/>
            <person name="Fosker N."/>
            <person name="Hall R."/>
            <person name="Garner P."/>
            <person name="Kelly D."/>
            <person name="Bird C."/>
            <person name="Palmer S."/>
            <person name="Gehring I."/>
            <person name="Berger A."/>
            <person name="Dooley C.M."/>
            <person name="Ersan-Urun Z."/>
            <person name="Eser C."/>
            <person name="Geiger H."/>
            <person name="Geisler M."/>
            <person name="Karotki L."/>
            <person name="Kirn A."/>
            <person name="Konantz J."/>
            <person name="Konantz M."/>
            <person name="Oberlander M."/>
            <person name="Rudolph-Geiger S."/>
            <person name="Teucke M."/>
            <person name="Lanz C."/>
            <person name="Raddatz G."/>
            <person name="Osoegawa K."/>
            <person name="Zhu B."/>
            <person name="Rapp A."/>
            <person name="Widaa S."/>
            <person name="Langford C."/>
            <person name="Yang F."/>
            <person name="Schuster S.C."/>
            <person name="Carter N.P."/>
            <person name="Harrow J."/>
            <person name="Ning Z."/>
            <person name="Herrero J."/>
            <person name="Searle S.M."/>
            <person name="Enright A."/>
            <person name="Geisler R."/>
            <person name="Plasterk R.H."/>
            <person name="Lee C."/>
            <person name="Westerfield M."/>
            <person name="de Jong P.J."/>
            <person name="Zon L.I."/>
            <person name="Postlethwait J.H."/>
            <person name="Nusslein-Volhard C."/>
            <person name="Hubbard T.J."/>
            <person name="Roest Crollius H."/>
            <person name="Rogers J."/>
            <person name="Stemple D.L."/>
        </authorList>
    </citation>
    <scope>NUCLEOTIDE SEQUENCE [LARGE SCALE GENOMIC DNA]</scope>
    <source>
        <strain>Tuebingen</strain>
    </source>
</reference>
<reference key="2">
    <citation type="submission" date="2007-06" db="EMBL/GenBank/DDBJ databases">
        <authorList>
            <consortium name="NIH - Zebrafish Gene Collection (ZGC) project"/>
        </authorList>
    </citation>
    <scope>NUCLEOTIDE SEQUENCE [LARGE SCALE MRNA]</scope>
    <source>
        <tissue>Larval eye</tissue>
    </source>
</reference>
<protein>
    <recommendedName>
        <fullName>TM2 domain-containing protein 1</fullName>
    </recommendedName>
</protein>